<organism>
    <name type="scientific">Burkholderia pseudomallei (strain K96243)</name>
    <dbReference type="NCBI Taxonomy" id="272560"/>
    <lineage>
        <taxon>Bacteria</taxon>
        <taxon>Pseudomonadati</taxon>
        <taxon>Pseudomonadota</taxon>
        <taxon>Betaproteobacteria</taxon>
        <taxon>Burkholderiales</taxon>
        <taxon>Burkholderiaceae</taxon>
        <taxon>Burkholderia</taxon>
        <taxon>pseudomallei group</taxon>
    </lineage>
</organism>
<keyword id="KW-0058">Aromatic hydrocarbons catabolism</keyword>
<keyword id="KW-0520">NAD</keyword>
<keyword id="KW-0560">Oxidoreductase</keyword>
<keyword id="KW-1185">Reference proteome</keyword>
<dbReference type="EC" id="1.2.1.10" evidence="1"/>
<dbReference type="EMBL" id="BX571966">
    <property type="protein sequence ID" value="CAH39284.1"/>
    <property type="molecule type" value="Genomic_DNA"/>
</dbReference>
<dbReference type="RefSeq" id="WP_004552044.1">
    <property type="nucleotide sequence ID" value="NZ_CP009537.1"/>
</dbReference>
<dbReference type="RefSeq" id="YP_111812.1">
    <property type="nucleotide sequence ID" value="NC_006351.1"/>
</dbReference>
<dbReference type="SMR" id="Q63JB0"/>
<dbReference type="STRING" id="272560.BPSS1808"/>
<dbReference type="KEGG" id="bps:BPSS1808"/>
<dbReference type="PATRIC" id="fig|272560.51.peg.5251"/>
<dbReference type="eggNOG" id="COG4569">
    <property type="taxonomic scope" value="Bacteria"/>
</dbReference>
<dbReference type="Proteomes" id="UP000000605">
    <property type="component" value="Chromosome 2"/>
</dbReference>
<dbReference type="GO" id="GO:0008774">
    <property type="term" value="F:acetaldehyde dehydrogenase (acetylating) activity"/>
    <property type="evidence" value="ECO:0007669"/>
    <property type="project" value="UniProtKB-UniRule"/>
</dbReference>
<dbReference type="GO" id="GO:0051287">
    <property type="term" value="F:NAD binding"/>
    <property type="evidence" value="ECO:0007669"/>
    <property type="project" value="UniProtKB-UniRule"/>
</dbReference>
<dbReference type="GO" id="GO:0009056">
    <property type="term" value="P:catabolic process"/>
    <property type="evidence" value="ECO:0007669"/>
    <property type="project" value="UniProtKB-KW"/>
</dbReference>
<dbReference type="CDD" id="cd23933">
    <property type="entry name" value="ALDH_C"/>
    <property type="match status" value="1"/>
</dbReference>
<dbReference type="Gene3D" id="3.30.360.10">
    <property type="entry name" value="Dihydrodipicolinate Reductase, domain 2"/>
    <property type="match status" value="1"/>
</dbReference>
<dbReference type="Gene3D" id="3.40.50.720">
    <property type="entry name" value="NAD(P)-binding Rossmann-like Domain"/>
    <property type="match status" value="1"/>
</dbReference>
<dbReference type="HAMAP" id="MF_01657">
    <property type="entry name" value="Ac_ald_DH_ac"/>
    <property type="match status" value="1"/>
</dbReference>
<dbReference type="InterPro" id="IPR003361">
    <property type="entry name" value="Acetaldehyde_dehydrogenase"/>
</dbReference>
<dbReference type="InterPro" id="IPR015426">
    <property type="entry name" value="Acetylaldehyde_DH_C"/>
</dbReference>
<dbReference type="InterPro" id="IPR036291">
    <property type="entry name" value="NAD(P)-bd_dom_sf"/>
</dbReference>
<dbReference type="InterPro" id="IPR000534">
    <property type="entry name" value="Semialdehyde_DH_NAD-bd"/>
</dbReference>
<dbReference type="NCBIfam" id="TIGR03215">
    <property type="entry name" value="ac_ald_DH_ac"/>
    <property type="match status" value="1"/>
</dbReference>
<dbReference type="NCBIfam" id="NF006157">
    <property type="entry name" value="PRK08300.1"/>
    <property type="match status" value="1"/>
</dbReference>
<dbReference type="Pfam" id="PF09290">
    <property type="entry name" value="AcetDehyd-dimer"/>
    <property type="match status" value="1"/>
</dbReference>
<dbReference type="Pfam" id="PF01118">
    <property type="entry name" value="Semialdhyde_dh"/>
    <property type="match status" value="1"/>
</dbReference>
<dbReference type="PIRSF" id="PIRSF015689">
    <property type="entry name" value="Actaldh_dh_actl"/>
    <property type="match status" value="1"/>
</dbReference>
<dbReference type="SMART" id="SM00859">
    <property type="entry name" value="Semialdhyde_dh"/>
    <property type="match status" value="1"/>
</dbReference>
<dbReference type="SUPFAM" id="SSF55347">
    <property type="entry name" value="Glyceraldehyde-3-phosphate dehydrogenase-like, C-terminal domain"/>
    <property type="match status" value="1"/>
</dbReference>
<dbReference type="SUPFAM" id="SSF51735">
    <property type="entry name" value="NAD(P)-binding Rossmann-fold domains"/>
    <property type="match status" value="1"/>
</dbReference>
<gene>
    <name type="primary">mhpF</name>
    <name type="ordered locus">BPSS1808</name>
</gene>
<comment type="catalytic activity">
    <reaction evidence="1">
        <text>acetaldehyde + NAD(+) + CoA = acetyl-CoA + NADH + H(+)</text>
        <dbReference type="Rhea" id="RHEA:23288"/>
        <dbReference type="ChEBI" id="CHEBI:15343"/>
        <dbReference type="ChEBI" id="CHEBI:15378"/>
        <dbReference type="ChEBI" id="CHEBI:57287"/>
        <dbReference type="ChEBI" id="CHEBI:57288"/>
        <dbReference type="ChEBI" id="CHEBI:57540"/>
        <dbReference type="ChEBI" id="CHEBI:57945"/>
        <dbReference type="EC" id="1.2.1.10"/>
    </reaction>
</comment>
<comment type="similarity">
    <text evidence="1">Belongs to the acetaldehyde dehydrogenase family.</text>
</comment>
<protein>
    <recommendedName>
        <fullName evidence="1">Acetaldehyde dehydrogenase</fullName>
        <ecNumber evidence="1">1.2.1.10</ecNumber>
    </recommendedName>
    <alternativeName>
        <fullName evidence="1">Acetaldehyde dehydrogenase [acetylating]</fullName>
    </alternativeName>
</protein>
<reference key="1">
    <citation type="journal article" date="2004" name="Proc. Natl. Acad. Sci. U.S.A.">
        <title>Genomic plasticity of the causative agent of melioidosis, Burkholderia pseudomallei.</title>
        <authorList>
            <person name="Holden M.T.G."/>
            <person name="Titball R.W."/>
            <person name="Peacock S.J."/>
            <person name="Cerdeno-Tarraga A.-M."/>
            <person name="Atkins T."/>
            <person name="Crossman L.C."/>
            <person name="Pitt T."/>
            <person name="Churcher C."/>
            <person name="Mungall K.L."/>
            <person name="Bentley S.D."/>
            <person name="Sebaihia M."/>
            <person name="Thomson N.R."/>
            <person name="Bason N."/>
            <person name="Beacham I.R."/>
            <person name="Brooks K."/>
            <person name="Brown K.A."/>
            <person name="Brown N.F."/>
            <person name="Challis G.L."/>
            <person name="Cherevach I."/>
            <person name="Chillingworth T."/>
            <person name="Cronin A."/>
            <person name="Crossett B."/>
            <person name="Davis P."/>
            <person name="DeShazer D."/>
            <person name="Feltwell T."/>
            <person name="Fraser A."/>
            <person name="Hance Z."/>
            <person name="Hauser H."/>
            <person name="Holroyd S."/>
            <person name="Jagels K."/>
            <person name="Keith K.E."/>
            <person name="Maddison M."/>
            <person name="Moule S."/>
            <person name="Price C."/>
            <person name="Quail M.A."/>
            <person name="Rabbinowitsch E."/>
            <person name="Rutherford K."/>
            <person name="Sanders M."/>
            <person name="Simmonds M."/>
            <person name="Songsivilai S."/>
            <person name="Stevens K."/>
            <person name="Tumapa S."/>
            <person name="Vesaratchavest M."/>
            <person name="Whitehead S."/>
            <person name="Yeats C."/>
            <person name="Barrell B.G."/>
            <person name="Oyston P.C.F."/>
            <person name="Parkhill J."/>
        </authorList>
    </citation>
    <scope>NUCLEOTIDE SEQUENCE [LARGE SCALE GENOMIC DNA]</scope>
    <source>
        <strain>K96243</strain>
    </source>
</reference>
<accession>Q63JB0</accession>
<evidence type="ECO:0000255" key="1">
    <source>
        <dbReference type="HAMAP-Rule" id="MF_01657"/>
    </source>
</evidence>
<proteinExistence type="inferred from homology"/>
<feature type="chain" id="PRO_0000387634" description="Acetaldehyde dehydrogenase">
    <location>
        <begin position="1"/>
        <end position="297"/>
    </location>
</feature>
<feature type="active site" description="Acyl-thioester intermediate" evidence="1">
    <location>
        <position position="130"/>
    </location>
</feature>
<feature type="binding site" evidence="1">
    <location>
        <begin position="15"/>
        <end position="18"/>
    </location>
    <ligand>
        <name>NAD(+)</name>
        <dbReference type="ChEBI" id="CHEBI:57540"/>
    </ligand>
</feature>
<feature type="binding site" evidence="1">
    <location>
        <begin position="162"/>
        <end position="170"/>
    </location>
    <ligand>
        <name>NAD(+)</name>
        <dbReference type="ChEBI" id="CHEBI:57540"/>
    </ligand>
</feature>
<feature type="binding site" evidence="1">
    <location>
        <position position="272"/>
    </location>
    <ligand>
        <name>NAD(+)</name>
        <dbReference type="ChEBI" id="CHEBI:57540"/>
    </ligand>
</feature>
<sequence length="297" mass="32346">MKSKSSRTRVAILGSGSIGLDLMFKVKASEQFDLKFVVGRNANSDGLRLARSCNVETSSDGLDFLKAHEDAYDLVFDATSAAAHKVNNRFFSDAGKFVIDLTPAKVGRLCVPCINLDDMGAEQNVNLITCGGQASLPLAYALKQAVDEIDYLEVVSAIASRSAGIATRENIDEYMTTTEYALAKFSDAKKTKAILNINPAEPGVRMQTTLYAYARYRDFDRVRASVADMVEKVREYVPGYRLVVEPLESQGRITIGLTVRGRGDYLPEYAGNLDIINCAALAVASHRHATARLGATQ</sequence>
<name>ACDH_BURPS</name>